<dbReference type="EMBL" id="BX248116">
    <property type="protein sequence ID" value="CAP19550.1"/>
    <property type="molecule type" value="Genomic_DNA"/>
</dbReference>
<dbReference type="RefSeq" id="NP_001138261.1">
    <property type="nucleotide sequence ID" value="NM_001144789.1"/>
</dbReference>
<dbReference type="FunCoup" id="A8WHR0">
    <property type="interactions" value="1262"/>
</dbReference>
<dbReference type="STRING" id="7955.ENSDARP00000121682"/>
<dbReference type="PaxDb" id="7955-ENSDARP00000121682"/>
<dbReference type="Ensembl" id="ENSDART00000145043">
    <property type="protein sequence ID" value="ENSDARP00000121682"/>
    <property type="gene ID" value="ENSDARG00000074909"/>
</dbReference>
<dbReference type="GeneID" id="558828"/>
<dbReference type="KEGG" id="dre:558828"/>
<dbReference type="AGR" id="ZFIN:ZDB-GENE-071008-1"/>
<dbReference type="CTD" id="80067"/>
<dbReference type="ZFIN" id="ZDB-GENE-071008-1">
    <property type="gene designation" value="dcaf17"/>
</dbReference>
<dbReference type="eggNOG" id="ENOG502QQ41">
    <property type="taxonomic scope" value="Eukaryota"/>
</dbReference>
<dbReference type="HOGENOM" id="CLU_604033_0_0_1"/>
<dbReference type="InParanoid" id="A8WHR0"/>
<dbReference type="OrthoDB" id="9971789at2759"/>
<dbReference type="PhylomeDB" id="A8WHR0"/>
<dbReference type="TreeFam" id="TF328801"/>
<dbReference type="Reactome" id="R-DRE-8951664">
    <property type="pathway name" value="Neddylation"/>
</dbReference>
<dbReference type="UniPathway" id="UPA00143"/>
<dbReference type="PRO" id="PR:A8WHR0"/>
<dbReference type="Proteomes" id="UP000000437">
    <property type="component" value="Chromosome 9"/>
</dbReference>
<dbReference type="Bgee" id="ENSDARG00000074909">
    <property type="expression patterns" value="Expressed in cleaving embryo and 26 other cell types or tissues"/>
</dbReference>
<dbReference type="ExpressionAtlas" id="A8WHR0">
    <property type="expression patterns" value="baseline"/>
</dbReference>
<dbReference type="GO" id="GO:0080008">
    <property type="term" value="C:Cul4-RING E3 ubiquitin ligase complex"/>
    <property type="evidence" value="ECO:0000250"/>
    <property type="project" value="UniProtKB"/>
</dbReference>
<dbReference type="GO" id="GO:0016020">
    <property type="term" value="C:membrane"/>
    <property type="evidence" value="ECO:0007669"/>
    <property type="project" value="UniProtKB-SubCell"/>
</dbReference>
<dbReference type="GO" id="GO:0005730">
    <property type="term" value="C:nucleolus"/>
    <property type="evidence" value="ECO:0007669"/>
    <property type="project" value="UniProtKB-SubCell"/>
</dbReference>
<dbReference type="GO" id="GO:0016567">
    <property type="term" value="P:protein ubiquitination"/>
    <property type="evidence" value="ECO:0007669"/>
    <property type="project" value="UniProtKB-UniPathway"/>
</dbReference>
<dbReference type="InterPro" id="IPR031620">
    <property type="entry name" value="DCAF17"/>
</dbReference>
<dbReference type="PANTHER" id="PTHR14815">
    <property type="entry name" value="DDB1- AND CUL4-ASSOCIATED FACTOR 17"/>
    <property type="match status" value="1"/>
</dbReference>
<dbReference type="PANTHER" id="PTHR14815:SF2">
    <property type="entry name" value="DDB1- AND CUL4-ASSOCIATED FACTOR 17"/>
    <property type="match status" value="1"/>
</dbReference>
<dbReference type="Pfam" id="PF15802">
    <property type="entry name" value="DCAF17"/>
    <property type="match status" value="1"/>
</dbReference>
<proteinExistence type="inferred from homology"/>
<sequence length="526" mass="59698">MCALPSPRAQRPPACTRTSKNSCALLASRYNGSCSNDFGRLLASNLKILRNIILKDDTEFVKVWSKTSKSLISYESGRIYFDNYRCCYSSLLPEPELLYELPRTPKTEKIEDALLCQCPLENVLPNASEQKSCLLTLTANNWLYLLSADTGETLQRVYLSSRFKFSRSLGWDSSQETFYVKSVQCKQTALERQAGVDNNILMRVAAFQVFPLQLVGMLEINKKVFGKTAVDVLLSQGVLAVSHSSKLVRLYSFEYIVNKFRTEELILGQQCELNNARGIVGDAPYGVPVNICIHECPPVLFEMTYFENGVQIGGHPWHYIYTPNHKRHRGTHHVCSITDGALAKNGVQDMKCDSLEVDWIFFHPDDSGRIIHAGPSTINILKIMAETGCDWKYEIITDFSITAARDSNASQVIVTSSGRTVKRRFQMLDDDPAQETFRMVKYEDELDLLAVVDITHAEDEGQARLRLHDNKTGALMKRVPLEEPWDVTYSHEVYFDRDTIIHTVQEKNNSFCCHVYKMKRPASDQP</sequence>
<feature type="chain" id="PRO_0000359591" description="DDB1- and CUL4-associated factor 17">
    <location>
        <begin position="1"/>
        <end position="526"/>
    </location>
</feature>
<feature type="transmembrane region" description="Helical" evidence="2">
    <location>
        <begin position="200"/>
        <end position="220"/>
    </location>
</feature>
<feature type="transmembrane region" description="Helical" evidence="2">
    <location>
        <begin position="237"/>
        <end position="257"/>
    </location>
</feature>
<keyword id="KW-0472">Membrane</keyword>
<keyword id="KW-0539">Nucleus</keyword>
<keyword id="KW-1185">Reference proteome</keyword>
<keyword id="KW-0812">Transmembrane</keyword>
<keyword id="KW-1133">Transmembrane helix</keyword>
<keyword id="KW-0833">Ubl conjugation pathway</keyword>
<gene>
    <name type="primary">dcaf17</name>
    <name type="ORF">si:ch211-245g15.4</name>
</gene>
<evidence type="ECO:0000250" key="1"/>
<evidence type="ECO:0000255" key="2"/>
<evidence type="ECO:0000305" key="3"/>
<accession>A8WHR0</accession>
<comment type="function">
    <text evidence="1">May function as a substrate receptor for CUL4-DDB1 E3 ubiquitin-protein ligase complex.</text>
</comment>
<comment type="pathway">
    <text>Protein modification; protein ubiquitination.</text>
</comment>
<comment type="subcellular location">
    <subcellularLocation>
        <location evidence="3">Membrane</location>
        <topology evidence="3">Multi-pass membrane protein</topology>
    </subcellularLocation>
    <subcellularLocation>
        <location evidence="1">Nucleus</location>
        <location evidence="1">Nucleolus</location>
    </subcellularLocation>
    <text>Has been shown in human and mouse to be a nucleolar protein, while sequence analysis programs clearly predict 2 transmembrane regions.</text>
</comment>
<protein>
    <recommendedName>
        <fullName>DDB1- and CUL4-associated factor 17</fullName>
    </recommendedName>
</protein>
<name>DCA17_DANRE</name>
<reference key="1">
    <citation type="journal article" date="2013" name="Nature">
        <title>The zebrafish reference genome sequence and its relationship to the human genome.</title>
        <authorList>
            <person name="Howe K."/>
            <person name="Clark M.D."/>
            <person name="Torroja C.F."/>
            <person name="Torrance J."/>
            <person name="Berthelot C."/>
            <person name="Muffato M."/>
            <person name="Collins J.E."/>
            <person name="Humphray S."/>
            <person name="McLaren K."/>
            <person name="Matthews L."/>
            <person name="McLaren S."/>
            <person name="Sealy I."/>
            <person name="Caccamo M."/>
            <person name="Churcher C."/>
            <person name="Scott C."/>
            <person name="Barrett J.C."/>
            <person name="Koch R."/>
            <person name="Rauch G.J."/>
            <person name="White S."/>
            <person name="Chow W."/>
            <person name="Kilian B."/>
            <person name="Quintais L.T."/>
            <person name="Guerra-Assuncao J.A."/>
            <person name="Zhou Y."/>
            <person name="Gu Y."/>
            <person name="Yen J."/>
            <person name="Vogel J.H."/>
            <person name="Eyre T."/>
            <person name="Redmond S."/>
            <person name="Banerjee R."/>
            <person name="Chi J."/>
            <person name="Fu B."/>
            <person name="Langley E."/>
            <person name="Maguire S.F."/>
            <person name="Laird G.K."/>
            <person name="Lloyd D."/>
            <person name="Kenyon E."/>
            <person name="Donaldson S."/>
            <person name="Sehra H."/>
            <person name="Almeida-King J."/>
            <person name="Loveland J."/>
            <person name="Trevanion S."/>
            <person name="Jones M."/>
            <person name="Quail M."/>
            <person name="Willey D."/>
            <person name="Hunt A."/>
            <person name="Burton J."/>
            <person name="Sims S."/>
            <person name="McLay K."/>
            <person name="Plumb B."/>
            <person name="Davis J."/>
            <person name="Clee C."/>
            <person name="Oliver K."/>
            <person name="Clark R."/>
            <person name="Riddle C."/>
            <person name="Elliot D."/>
            <person name="Threadgold G."/>
            <person name="Harden G."/>
            <person name="Ware D."/>
            <person name="Begum S."/>
            <person name="Mortimore B."/>
            <person name="Kerry G."/>
            <person name="Heath P."/>
            <person name="Phillimore B."/>
            <person name="Tracey A."/>
            <person name="Corby N."/>
            <person name="Dunn M."/>
            <person name="Johnson C."/>
            <person name="Wood J."/>
            <person name="Clark S."/>
            <person name="Pelan S."/>
            <person name="Griffiths G."/>
            <person name="Smith M."/>
            <person name="Glithero R."/>
            <person name="Howden P."/>
            <person name="Barker N."/>
            <person name="Lloyd C."/>
            <person name="Stevens C."/>
            <person name="Harley J."/>
            <person name="Holt K."/>
            <person name="Panagiotidis G."/>
            <person name="Lovell J."/>
            <person name="Beasley H."/>
            <person name="Henderson C."/>
            <person name="Gordon D."/>
            <person name="Auger K."/>
            <person name="Wright D."/>
            <person name="Collins J."/>
            <person name="Raisen C."/>
            <person name="Dyer L."/>
            <person name="Leung K."/>
            <person name="Robertson L."/>
            <person name="Ambridge K."/>
            <person name="Leongamornlert D."/>
            <person name="McGuire S."/>
            <person name="Gilderthorp R."/>
            <person name="Griffiths C."/>
            <person name="Manthravadi D."/>
            <person name="Nichol S."/>
            <person name="Barker G."/>
            <person name="Whitehead S."/>
            <person name="Kay M."/>
            <person name="Brown J."/>
            <person name="Murnane C."/>
            <person name="Gray E."/>
            <person name="Humphries M."/>
            <person name="Sycamore N."/>
            <person name="Barker D."/>
            <person name="Saunders D."/>
            <person name="Wallis J."/>
            <person name="Babbage A."/>
            <person name="Hammond S."/>
            <person name="Mashreghi-Mohammadi M."/>
            <person name="Barr L."/>
            <person name="Martin S."/>
            <person name="Wray P."/>
            <person name="Ellington A."/>
            <person name="Matthews N."/>
            <person name="Ellwood M."/>
            <person name="Woodmansey R."/>
            <person name="Clark G."/>
            <person name="Cooper J."/>
            <person name="Tromans A."/>
            <person name="Grafham D."/>
            <person name="Skuce C."/>
            <person name="Pandian R."/>
            <person name="Andrews R."/>
            <person name="Harrison E."/>
            <person name="Kimberley A."/>
            <person name="Garnett J."/>
            <person name="Fosker N."/>
            <person name="Hall R."/>
            <person name="Garner P."/>
            <person name="Kelly D."/>
            <person name="Bird C."/>
            <person name="Palmer S."/>
            <person name="Gehring I."/>
            <person name="Berger A."/>
            <person name="Dooley C.M."/>
            <person name="Ersan-Urun Z."/>
            <person name="Eser C."/>
            <person name="Geiger H."/>
            <person name="Geisler M."/>
            <person name="Karotki L."/>
            <person name="Kirn A."/>
            <person name="Konantz J."/>
            <person name="Konantz M."/>
            <person name="Oberlander M."/>
            <person name="Rudolph-Geiger S."/>
            <person name="Teucke M."/>
            <person name="Lanz C."/>
            <person name="Raddatz G."/>
            <person name="Osoegawa K."/>
            <person name="Zhu B."/>
            <person name="Rapp A."/>
            <person name="Widaa S."/>
            <person name="Langford C."/>
            <person name="Yang F."/>
            <person name="Schuster S.C."/>
            <person name="Carter N.P."/>
            <person name="Harrow J."/>
            <person name="Ning Z."/>
            <person name="Herrero J."/>
            <person name="Searle S.M."/>
            <person name="Enright A."/>
            <person name="Geisler R."/>
            <person name="Plasterk R.H."/>
            <person name="Lee C."/>
            <person name="Westerfield M."/>
            <person name="de Jong P.J."/>
            <person name="Zon L.I."/>
            <person name="Postlethwait J.H."/>
            <person name="Nusslein-Volhard C."/>
            <person name="Hubbard T.J."/>
            <person name="Roest Crollius H."/>
            <person name="Rogers J."/>
            <person name="Stemple D.L."/>
        </authorList>
    </citation>
    <scope>NUCLEOTIDE SEQUENCE [LARGE SCALE GENOMIC DNA]</scope>
    <source>
        <strain>Tuebingen</strain>
    </source>
</reference>
<organism>
    <name type="scientific">Danio rerio</name>
    <name type="common">Zebrafish</name>
    <name type="synonym">Brachydanio rerio</name>
    <dbReference type="NCBI Taxonomy" id="7955"/>
    <lineage>
        <taxon>Eukaryota</taxon>
        <taxon>Metazoa</taxon>
        <taxon>Chordata</taxon>
        <taxon>Craniata</taxon>
        <taxon>Vertebrata</taxon>
        <taxon>Euteleostomi</taxon>
        <taxon>Actinopterygii</taxon>
        <taxon>Neopterygii</taxon>
        <taxon>Teleostei</taxon>
        <taxon>Ostariophysi</taxon>
        <taxon>Cypriniformes</taxon>
        <taxon>Danionidae</taxon>
        <taxon>Danioninae</taxon>
        <taxon>Danio</taxon>
    </lineage>
</organism>